<evidence type="ECO:0000250" key="1"/>
<evidence type="ECO:0000305" key="2"/>
<keyword id="KW-0210">Decarboxylase</keyword>
<keyword id="KW-0456">Lyase</keyword>
<keyword id="KW-0460">Magnesium</keyword>
<keyword id="KW-0479">Metal-binding</keyword>
<keyword id="KW-1185">Reference proteome</keyword>
<keyword id="KW-0786">Thiamine pyrophosphate</keyword>
<dbReference type="EC" id="4.1.1.1"/>
<dbReference type="EMBL" id="X81854">
    <property type="protein sequence ID" value="CAA57447.1"/>
    <property type="molecule type" value="mRNA"/>
</dbReference>
<dbReference type="PIR" id="S57820">
    <property type="entry name" value="S57820"/>
</dbReference>
<dbReference type="SMR" id="P51845"/>
<dbReference type="STRING" id="4097.P51845"/>
<dbReference type="PaxDb" id="4097-P51845"/>
<dbReference type="Proteomes" id="UP000084051">
    <property type="component" value="Unplaced"/>
</dbReference>
<dbReference type="GO" id="GO:0005829">
    <property type="term" value="C:cytosol"/>
    <property type="evidence" value="ECO:0000318"/>
    <property type="project" value="GO_Central"/>
</dbReference>
<dbReference type="GO" id="GO:0000287">
    <property type="term" value="F:magnesium ion binding"/>
    <property type="evidence" value="ECO:0007669"/>
    <property type="project" value="InterPro"/>
</dbReference>
<dbReference type="GO" id="GO:0004737">
    <property type="term" value="F:pyruvate decarboxylase activity"/>
    <property type="evidence" value="ECO:0000318"/>
    <property type="project" value="GO_Central"/>
</dbReference>
<dbReference type="GO" id="GO:0030976">
    <property type="term" value="F:thiamine pyrophosphate binding"/>
    <property type="evidence" value="ECO:0007669"/>
    <property type="project" value="InterPro"/>
</dbReference>
<dbReference type="GO" id="GO:0000949">
    <property type="term" value="P:aromatic amino acid family catabolic process to alcohol via Ehrlich pathway"/>
    <property type="evidence" value="ECO:0000318"/>
    <property type="project" value="GO_Central"/>
</dbReference>
<dbReference type="CDD" id="cd07038">
    <property type="entry name" value="TPP_PYR_PDC_IPDC_like"/>
    <property type="match status" value="1"/>
</dbReference>
<dbReference type="FunFam" id="3.40.50.1220:FF:000009">
    <property type="entry name" value="Pyruvate decarboxylase 1"/>
    <property type="match status" value="1"/>
</dbReference>
<dbReference type="Gene3D" id="3.40.50.970">
    <property type="match status" value="2"/>
</dbReference>
<dbReference type="Gene3D" id="3.40.50.1220">
    <property type="entry name" value="TPP-binding domain"/>
    <property type="match status" value="1"/>
</dbReference>
<dbReference type="InterPro" id="IPR029035">
    <property type="entry name" value="DHS-like_NAD/FAD-binding_dom"/>
</dbReference>
<dbReference type="InterPro" id="IPR012110">
    <property type="entry name" value="PDC/IPDC-like"/>
</dbReference>
<dbReference type="InterPro" id="IPR029061">
    <property type="entry name" value="THDP-binding"/>
</dbReference>
<dbReference type="InterPro" id="IPR012000">
    <property type="entry name" value="Thiamin_PyroP_enz_cen_dom"/>
</dbReference>
<dbReference type="InterPro" id="IPR012001">
    <property type="entry name" value="Thiamin_PyroP_enz_TPP-bd_dom"/>
</dbReference>
<dbReference type="InterPro" id="IPR011766">
    <property type="entry name" value="TPP_enzyme_TPP-bd"/>
</dbReference>
<dbReference type="InterPro" id="IPR047213">
    <property type="entry name" value="TPP_PYR_PDC_IPDC-like"/>
</dbReference>
<dbReference type="PANTHER" id="PTHR43452">
    <property type="entry name" value="PYRUVATE DECARBOXYLASE"/>
    <property type="match status" value="1"/>
</dbReference>
<dbReference type="PANTHER" id="PTHR43452:SF6">
    <property type="entry name" value="PYRUVATE DECARBOXYLASE 2"/>
    <property type="match status" value="1"/>
</dbReference>
<dbReference type="Pfam" id="PF02775">
    <property type="entry name" value="TPP_enzyme_C"/>
    <property type="match status" value="1"/>
</dbReference>
<dbReference type="Pfam" id="PF00205">
    <property type="entry name" value="TPP_enzyme_M"/>
    <property type="match status" value="1"/>
</dbReference>
<dbReference type="Pfam" id="PF02776">
    <property type="entry name" value="TPP_enzyme_N"/>
    <property type="match status" value="1"/>
</dbReference>
<dbReference type="SUPFAM" id="SSF52467">
    <property type="entry name" value="DHS-like NAD/FAD-binding domain"/>
    <property type="match status" value="1"/>
</dbReference>
<dbReference type="SUPFAM" id="SSF52518">
    <property type="entry name" value="Thiamin diphosphate-binding fold (THDP-binding)"/>
    <property type="match status" value="2"/>
</dbReference>
<name>PDC1_TOBAC</name>
<organism>
    <name type="scientific">Nicotiana tabacum</name>
    <name type="common">Common tobacco</name>
    <dbReference type="NCBI Taxonomy" id="4097"/>
    <lineage>
        <taxon>Eukaryota</taxon>
        <taxon>Viridiplantae</taxon>
        <taxon>Streptophyta</taxon>
        <taxon>Embryophyta</taxon>
        <taxon>Tracheophyta</taxon>
        <taxon>Spermatophyta</taxon>
        <taxon>Magnoliopsida</taxon>
        <taxon>eudicotyledons</taxon>
        <taxon>Gunneridae</taxon>
        <taxon>Pentapetalae</taxon>
        <taxon>asterids</taxon>
        <taxon>lamiids</taxon>
        <taxon>Solanales</taxon>
        <taxon>Solanaceae</taxon>
        <taxon>Nicotianoideae</taxon>
        <taxon>Nicotianeae</taxon>
        <taxon>Nicotiana</taxon>
    </lineage>
</organism>
<comment type="catalytic activity">
    <reaction>
        <text>a 2-oxocarboxylate + H(+) = an aldehyde + CO2</text>
        <dbReference type="Rhea" id="RHEA:11628"/>
        <dbReference type="ChEBI" id="CHEBI:15378"/>
        <dbReference type="ChEBI" id="CHEBI:16526"/>
        <dbReference type="ChEBI" id="CHEBI:17478"/>
        <dbReference type="ChEBI" id="CHEBI:35179"/>
        <dbReference type="EC" id="4.1.1.1"/>
    </reaction>
</comment>
<comment type="cofactor">
    <cofactor>
        <name>a metal cation</name>
        <dbReference type="ChEBI" id="CHEBI:25213"/>
    </cofactor>
    <text>Binds 1 metal ion per subunit.</text>
</comment>
<comment type="cofactor">
    <cofactor>
        <name>thiamine diphosphate</name>
        <dbReference type="ChEBI" id="CHEBI:58937"/>
    </cofactor>
    <text>Binds 1 thiamine pyrophosphate per subunit.</text>
</comment>
<comment type="subunit">
    <text evidence="2">Homotetramer.</text>
</comment>
<comment type="tissue specificity">
    <text>Leaves.</text>
</comment>
<comment type="induction">
    <text>Anaerobically.</text>
</comment>
<comment type="similarity">
    <text evidence="2">Belongs to the TPP enzyme family.</text>
</comment>
<gene>
    <name type="primary">PDC1</name>
</gene>
<proteinExistence type="evidence at transcript level"/>
<feature type="chain" id="PRO_0000090777" description="Pyruvate decarboxylase 1">
    <location>
        <begin position="1" status="less than"/>
        <end position="418" status="greater than"/>
    </location>
</feature>
<feature type="region of interest" description="Thiamine pyrophosphate binding">
    <location>
        <begin position="337"/>
        <end position="418"/>
    </location>
</feature>
<feature type="binding site" evidence="1">
    <location>
        <position position="59"/>
    </location>
    <ligand>
        <name>substrate</name>
    </ligand>
</feature>
<feature type="binding site" evidence="1">
    <location>
        <position position="387"/>
    </location>
    <ligand>
        <name>Mg(2+)</name>
        <dbReference type="ChEBI" id="CHEBI:18420"/>
    </ligand>
</feature>
<feature type="binding site" evidence="1">
    <location>
        <position position="414"/>
    </location>
    <ligand>
        <name>Mg(2+)</name>
        <dbReference type="ChEBI" id="CHEBI:18420"/>
    </ligand>
</feature>
<feature type="binding site" evidence="1">
    <location>
        <position position="416"/>
    </location>
    <ligand>
        <name>Mg(2+)</name>
        <dbReference type="ChEBI" id="CHEBI:18420"/>
    </ligand>
</feature>
<feature type="non-terminal residue">
    <location>
        <position position="1"/>
    </location>
</feature>
<feature type="non-terminal residue">
    <location>
        <position position="418"/>
    </location>
</feature>
<accession>P51845</accession>
<reference key="1">
    <citation type="journal article" date="1995" name="Plant Mol. Biol.">
        <title>Aerobic fermentation in tobacco pollen.</title>
        <authorList>
            <person name="Bucher M."/>
            <person name="Brander K."/>
            <person name="Sbicego S."/>
            <person name="Mandel T."/>
            <person name="Kuhlemeier C."/>
        </authorList>
    </citation>
    <scope>NUCLEOTIDE SEQUENCE [MRNA]</scope>
    <source>
        <strain>cv. Samsun</strain>
        <tissue>Leaf</tissue>
    </source>
</reference>
<sequence>AADGYARARGVGACVVTFTVGGLSVLNAIAGAYSENLPLICIVGGPNSNDYGTNRILHHTIGLQDFSQEPRCFQTVTCYRAVVNNLEDAHELIDTAVSTALKESKPVYISIGCNLPGIPHPTFSREPVPFALSPRLSNMMGLEAAVEAAAEFLNKAVKPVLVGGPKMRVAKASDAFVELSDACGYAVAVMPSAKGLFPEHHSHFIGTYWGAVSTAFCAEIVESADAYLFAGPIFNDYSSVGYSLLLKKEKAIIVQPDRVTIGNGPAFGCVLMRDFLAALAKRLKHNPTAFENYHRIYVPEGHPLKCEPKEALRVNVLFQHIQNMLSGDSVVIAETGDSWFNCQKLKLPKGCGYEFQMQYGSIGWSVGATLGYAQAAPEKRVIACIGDGSFQVTAQDISTMLRCGQRTIIFLINNGGYT</sequence>
<protein>
    <recommendedName>
        <fullName>Pyruvate decarboxylase 1</fullName>
        <shortName>PDC</shortName>
        <ecNumber>4.1.1.1</ecNumber>
    </recommendedName>
</protein>